<comment type="function">
    <text evidence="1">The PI(3,5)P2 regulatory complex regulates both the synthesis and turnover of phosphatidylinositol 3,5-bisphosphate (PtdIns(3,5)P2). Required for autophagy (By similarity).</text>
</comment>
<comment type="subunit">
    <text evidence="1">Component of the PI(3,5)P2 regulatory complex at least composed of ATG18, SAC/FIG4, FAB1 and VAC14.</text>
</comment>
<comment type="subcellular location">
    <subcellularLocation>
        <location evidence="1">Preautophagosomal structure membrane</location>
        <topology evidence="1">Peripheral membrane protein</topology>
    </subcellularLocation>
    <subcellularLocation>
        <location evidence="1">Vacuole membrane</location>
        <topology evidence="1">Peripheral membrane protein</topology>
    </subcellularLocation>
    <text evidence="1">Peripheral membrane protein of pre-autophagosomal structure (PAS) and vacuole.</text>
</comment>
<comment type="domain">
    <text evidence="1">The first protein part may form a beta-propeller domain involved in specific binding to phosphatidylinositol 3,5-bisphosphate (PIP2), leading to the association of the protein to the membrane.</text>
</comment>
<comment type="similarity">
    <text evidence="2">Belongs to the WD repeat PROPPIN family.</text>
</comment>
<reference key="1">
    <citation type="journal article" date="1999" name="DNA Res.">
        <title>Structural analysis of Arabidopsis thaliana chromosome 5. IX. Sequence features of the regions of 1,011,550 bp covered by seventeen P1 and TAC clones.</title>
        <authorList>
            <person name="Kaneko T."/>
            <person name="Katoh T."/>
            <person name="Sato S."/>
            <person name="Nakamura Y."/>
            <person name="Asamizu E."/>
            <person name="Kotani H."/>
            <person name="Miyajima N."/>
            <person name="Tabata S."/>
        </authorList>
    </citation>
    <scope>NUCLEOTIDE SEQUENCE [LARGE SCALE GENOMIC DNA]</scope>
    <source>
        <strain>cv. Columbia</strain>
    </source>
</reference>
<reference key="2">
    <citation type="journal article" date="2017" name="Plant J.">
        <title>Araport11: a complete reannotation of the Arabidopsis thaliana reference genome.</title>
        <authorList>
            <person name="Cheng C.Y."/>
            <person name="Krishnakumar V."/>
            <person name="Chan A.P."/>
            <person name="Thibaud-Nissen F."/>
            <person name="Schobel S."/>
            <person name="Town C.D."/>
        </authorList>
    </citation>
    <scope>GENOME REANNOTATION</scope>
    <source>
        <strain>cv. Columbia</strain>
    </source>
</reference>
<reference key="3">
    <citation type="submission" date="2005-05" db="EMBL/GenBank/DDBJ databases">
        <authorList>
            <person name="Underwood B.A."/>
            <person name="Xiao Y.-L."/>
            <person name="Moskal W.A. Jr."/>
            <person name="Monaghan E.L."/>
            <person name="Wang W."/>
            <person name="Redman J.C."/>
            <person name="Wu H.C."/>
            <person name="Utterback T."/>
            <person name="Town C.D."/>
        </authorList>
    </citation>
    <scope>NUCLEOTIDE SEQUENCE [LARGE SCALE MRNA]</scope>
    <source>
        <strain>cv. Columbia</strain>
    </source>
</reference>
<reference key="4">
    <citation type="journal article" date="2005" name="Plant J.">
        <title>AtATG18a is required for the formation of autophagosomes during nutrient stress and senescence in Arabidopsis thaliana.</title>
        <authorList>
            <person name="Xiong Y."/>
            <person name="Contento A.L."/>
            <person name="Bassham D.C."/>
        </authorList>
    </citation>
    <scope>GENE FAMILY</scope>
</reference>
<name>AT18E_ARATH</name>
<sequence>MNSIVSTVRGILTLSRSETFDSPRDEAKSDLKVLSVAWNQVCSGFIVGTNHGFNVYSCKPMIKKSISRAPHESGFKVAEMLFLSNLFAFVGNGYNNSEYPPNKVFVWDDYRNCCLSELTFKSEVIAVKLAREHVVVVLKQNIYVYTFNNLKVDRVIETLMNPKGLCCVTHVESKAVLACPGFHPGQVQVHDLRWNVIKFIKAHDSAIACMTLTLDGSLLATASTKGTLIRIFNAVDGTLLQEFRRGVERAEIYNVAISSNLKWVAASSEKGTLHVFRLRPDILSFDPASSSSFIRVILPKYLYENERSFAQFSLPASTKFIVGFGSENTVLLVGIDGSFRRCKFDHADGGQMVELEHKYFFSLQETGNTMVGGV</sequence>
<feature type="chain" id="PRO_0000421883" description="Autophagy-related protein 18e">
    <location>
        <begin position="1"/>
        <end position="374"/>
    </location>
</feature>
<feature type="repeat" description="WD 1">
    <location>
        <begin position="28"/>
        <end position="66"/>
    </location>
</feature>
<feature type="repeat" description="WD 2">
    <location>
        <begin position="72"/>
        <end position="117"/>
    </location>
</feature>
<feature type="repeat" description="WD 3">
    <location>
        <begin position="202"/>
        <end position="242"/>
    </location>
</feature>
<feature type="repeat" description="WD 4">
    <location>
        <begin position="247"/>
        <end position="286"/>
    </location>
</feature>
<evidence type="ECO:0000250" key="1"/>
<evidence type="ECO:0000305" key="2"/>
<keyword id="KW-0072">Autophagy</keyword>
<keyword id="KW-0472">Membrane</keyword>
<keyword id="KW-0653">Protein transport</keyword>
<keyword id="KW-1185">Reference proteome</keyword>
<keyword id="KW-0677">Repeat</keyword>
<keyword id="KW-0813">Transport</keyword>
<keyword id="KW-0926">Vacuole</keyword>
<keyword id="KW-0853">WD repeat</keyword>
<proteinExistence type="evidence at transcript level"/>
<organism>
    <name type="scientific">Arabidopsis thaliana</name>
    <name type="common">Mouse-ear cress</name>
    <dbReference type="NCBI Taxonomy" id="3702"/>
    <lineage>
        <taxon>Eukaryota</taxon>
        <taxon>Viridiplantae</taxon>
        <taxon>Streptophyta</taxon>
        <taxon>Embryophyta</taxon>
        <taxon>Tracheophyta</taxon>
        <taxon>Spermatophyta</taxon>
        <taxon>Magnoliopsida</taxon>
        <taxon>eudicotyledons</taxon>
        <taxon>Gunneridae</taxon>
        <taxon>Pentapetalae</taxon>
        <taxon>rosids</taxon>
        <taxon>malvids</taxon>
        <taxon>Brassicales</taxon>
        <taxon>Brassicaceae</taxon>
        <taxon>Camelineae</taxon>
        <taxon>Arabidopsis</taxon>
    </lineage>
</organism>
<gene>
    <name type="primary">ATG18E</name>
    <name type="ordered locus">At5g05150</name>
    <name type="ORF">K2A11.2</name>
</gene>
<dbReference type="EMBL" id="AB018111">
    <property type="protein sequence ID" value="BAB09691.1"/>
    <property type="molecule type" value="Genomic_DNA"/>
</dbReference>
<dbReference type="EMBL" id="CP002688">
    <property type="protein sequence ID" value="AED90834.1"/>
    <property type="molecule type" value="Genomic_DNA"/>
</dbReference>
<dbReference type="EMBL" id="DQ056670">
    <property type="protein sequence ID" value="AAY78816.1"/>
    <property type="molecule type" value="mRNA"/>
</dbReference>
<dbReference type="SMR" id="Q9FHK8"/>
<dbReference type="FunCoup" id="Q9FHK8">
    <property type="interactions" value="3169"/>
</dbReference>
<dbReference type="STRING" id="3702.Q9FHK8"/>
<dbReference type="PaxDb" id="3702-AT5G05150.1"/>
<dbReference type="EnsemblPlants" id="AT5G05150.1">
    <property type="protein sequence ID" value="AT5G05150.1"/>
    <property type="gene ID" value="AT5G05150"/>
</dbReference>
<dbReference type="GeneID" id="830397"/>
<dbReference type="Gramene" id="AT5G05150.1">
    <property type="protein sequence ID" value="AT5G05150.1"/>
    <property type="gene ID" value="AT5G05150"/>
</dbReference>
<dbReference type="KEGG" id="ath:AT5G05150"/>
<dbReference type="Araport" id="AT5G05150"/>
<dbReference type="TAIR" id="AT5G05150">
    <property type="gene designation" value="G18E"/>
</dbReference>
<dbReference type="eggNOG" id="KOG2111">
    <property type="taxonomic scope" value="Eukaryota"/>
</dbReference>
<dbReference type="HOGENOM" id="CLU_025895_2_1_1"/>
<dbReference type="InParanoid" id="Q9FHK8"/>
<dbReference type="OMA" id="LEHKHFF"/>
<dbReference type="PhylomeDB" id="Q9FHK8"/>
<dbReference type="PRO" id="PR:Q9FHK8"/>
<dbReference type="Proteomes" id="UP000006548">
    <property type="component" value="Chromosome 5"/>
</dbReference>
<dbReference type="ExpressionAtlas" id="Q9FHK8">
    <property type="expression patterns" value="baseline and differential"/>
</dbReference>
<dbReference type="GO" id="GO:0034045">
    <property type="term" value="C:phagophore assembly site membrane"/>
    <property type="evidence" value="ECO:0007669"/>
    <property type="project" value="UniProtKB-SubCell"/>
</dbReference>
<dbReference type="GO" id="GO:0005774">
    <property type="term" value="C:vacuolar membrane"/>
    <property type="evidence" value="ECO:0007669"/>
    <property type="project" value="UniProtKB-SubCell"/>
</dbReference>
<dbReference type="GO" id="GO:0006914">
    <property type="term" value="P:autophagy"/>
    <property type="evidence" value="ECO:0007669"/>
    <property type="project" value="UniProtKB-KW"/>
</dbReference>
<dbReference type="GO" id="GO:0015031">
    <property type="term" value="P:protein transport"/>
    <property type="evidence" value="ECO:0007669"/>
    <property type="project" value="UniProtKB-KW"/>
</dbReference>
<dbReference type="FunFam" id="2.130.10.10:FF:002748">
    <property type="entry name" value="Autophagy-related protein 18e"/>
    <property type="match status" value="1"/>
</dbReference>
<dbReference type="Gene3D" id="2.130.10.10">
    <property type="entry name" value="YVTN repeat-like/Quinoprotein amine dehydrogenase"/>
    <property type="match status" value="1"/>
</dbReference>
<dbReference type="InterPro" id="IPR048720">
    <property type="entry name" value="PROPPIN"/>
</dbReference>
<dbReference type="InterPro" id="IPR015943">
    <property type="entry name" value="WD40/YVTN_repeat-like_dom_sf"/>
</dbReference>
<dbReference type="InterPro" id="IPR036322">
    <property type="entry name" value="WD40_repeat_dom_sf"/>
</dbReference>
<dbReference type="InterPro" id="IPR001680">
    <property type="entry name" value="WD40_rpt"/>
</dbReference>
<dbReference type="PANTHER" id="PTHR11227">
    <property type="entry name" value="WD-REPEAT PROTEIN INTERACTING WITH PHOSPHOINOSIDES WIPI -RELATED"/>
    <property type="match status" value="1"/>
</dbReference>
<dbReference type="Pfam" id="PF21032">
    <property type="entry name" value="PROPPIN"/>
    <property type="match status" value="1"/>
</dbReference>
<dbReference type="SMART" id="SM00320">
    <property type="entry name" value="WD40"/>
    <property type="match status" value="2"/>
</dbReference>
<dbReference type="SUPFAM" id="SSF50978">
    <property type="entry name" value="WD40 repeat-like"/>
    <property type="match status" value="1"/>
</dbReference>
<accession>Q9FHK8</accession>
<protein>
    <recommendedName>
        <fullName>Autophagy-related protein 18e</fullName>
        <shortName>AtATG18e</shortName>
    </recommendedName>
</protein>